<evidence type="ECO:0000255" key="1">
    <source>
        <dbReference type="HAMAP-Rule" id="MF_00821"/>
    </source>
</evidence>
<feature type="chain" id="PRO_1000195353" description="Protein-export protein SecB">
    <location>
        <begin position="1"/>
        <end position="167"/>
    </location>
</feature>
<organism>
    <name type="scientific">Wolbachia pipientis subsp. Culex pipiens (strain wPip)</name>
    <dbReference type="NCBI Taxonomy" id="570417"/>
    <lineage>
        <taxon>Bacteria</taxon>
        <taxon>Pseudomonadati</taxon>
        <taxon>Pseudomonadota</taxon>
        <taxon>Alphaproteobacteria</taxon>
        <taxon>Rickettsiales</taxon>
        <taxon>Anaplasmataceae</taxon>
        <taxon>Wolbachieae</taxon>
        <taxon>Wolbachia</taxon>
    </lineage>
</organism>
<proteinExistence type="inferred from homology"/>
<name>SECB_WOLPP</name>
<comment type="function">
    <text evidence="1">One of the proteins required for the normal export of preproteins out of the cell cytoplasm. It is a molecular chaperone that binds to a subset of precursor proteins, maintaining them in a translocation-competent state. It also specifically binds to its receptor SecA.</text>
</comment>
<comment type="subunit">
    <text evidence="1">Homotetramer, a dimer of dimers. One homotetramer interacts with 1 SecA dimer.</text>
</comment>
<comment type="subcellular location">
    <subcellularLocation>
        <location evidence="1">Cytoplasm</location>
    </subcellularLocation>
</comment>
<comment type="similarity">
    <text evidence="1">Belongs to the SecB family.</text>
</comment>
<protein>
    <recommendedName>
        <fullName evidence="1">Protein-export protein SecB</fullName>
    </recommendedName>
</protein>
<gene>
    <name evidence="1" type="primary">secB</name>
    <name type="ordered locus">WP1088</name>
</gene>
<sequence>MSQHKMKIHGQYVKDFSFENPNSPFLPSSKAPDINVMVNINSAKLEGTENKKGISEEKPFHEITLHIEAKATVKDEDVKDDIAFICEVKYCGIFSIENFTELSEEEVRQALFIGGPTFLFPFAREIIARTTSSGGFPPLMLDPIDFETMYQQQSQQQKSSASNSNFN</sequence>
<dbReference type="EMBL" id="AM999887">
    <property type="protein sequence ID" value="CAQ55196.1"/>
    <property type="molecule type" value="Genomic_DNA"/>
</dbReference>
<dbReference type="RefSeq" id="WP_007302467.1">
    <property type="nucleotide sequence ID" value="NC_010981.1"/>
</dbReference>
<dbReference type="SMR" id="B3CMS4"/>
<dbReference type="KEGG" id="wpi:WP1088"/>
<dbReference type="eggNOG" id="COG1952">
    <property type="taxonomic scope" value="Bacteria"/>
</dbReference>
<dbReference type="HOGENOM" id="CLU_111574_1_0_5"/>
<dbReference type="Proteomes" id="UP000008814">
    <property type="component" value="Chromosome"/>
</dbReference>
<dbReference type="GO" id="GO:0005737">
    <property type="term" value="C:cytoplasm"/>
    <property type="evidence" value="ECO:0007669"/>
    <property type="project" value="UniProtKB-SubCell"/>
</dbReference>
<dbReference type="GO" id="GO:0051082">
    <property type="term" value="F:unfolded protein binding"/>
    <property type="evidence" value="ECO:0007669"/>
    <property type="project" value="InterPro"/>
</dbReference>
<dbReference type="GO" id="GO:0006457">
    <property type="term" value="P:protein folding"/>
    <property type="evidence" value="ECO:0007669"/>
    <property type="project" value="UniProtKB-UniRule"/>
</dbReference>
<dbReference type="GO" id="GO:0051262">
    <property type="term" value="P:protein tetramerization"/>
    <property type="evidence" value="ECO:0007669"/>
    <property type="project" value="InterPro"/>
</dbReference>
<dbReference type="GO" id="GO:0015031">
    <property type="term" value="P:protein transport"/>
    <property type="evidence" value="ECO:0007669"/>
    <property type="project" value="UniProtKB-UniRule"/>
</dbReference>
<dbReference type="Gene3D" id="3.10.420.10">
    <property type="entry name" value="SecB-like"/>
    <property type="match status" value="1"/>
</dbReference>
<dbReference type="HAMAP" id="MF_00821">
    <property type="entry name" value="SecB"/>
    <property type="match status" value="1"/>
</dbReference>
<dbReference type="InterPro" id="IPR003708">
    <property type="entry name" value="SecB"/>
</dbReference>
<dbReference type="InterPro" id="IPR035958">
    <property type="entry name" value="SecB-like_sf"/>
</dbReference>
<dbReference type="NCBIfam" id="NF004392">
    <property type="entry name" value="PRK05751.1-3"/>
    <property type="match status" value="1"/>
</dbReference>
<dbReference type="NCBIfam" id="TIGR00809">
    <property type="entry name" value="secB"/>
    <property type="match status" value="1"/>
</dbReference>
<dbReference type="PANTHER" id="PTHR36918">
    <property type="match status" value="1"/>
</dbReference>
<dbReference type="PANTHER" id="PTHR36918:SF1">
    <property type="entry name" value="PROTEIN-EXPORT PROTEIN SECB"/>
    <property type="match status" value="1"/>
</dbReference>
<dbReference type="Pfam" id="PF02556">
    <property type="entry name" value="SecB"/>
    <property type="match status" value="1"/>
</dbReference>
<dbReference type="SUPFAM" id="SSF54611">
    <property type="entry name" value="SecB-like"/>
    <property type="match status" value="1"/>
</dbReference>
<keyword id="KW-0143">Chaperone</keyword>
<keyword id="KW-0963">Cytoplasm</keyword>
<keyword id="KW-0653">Protein transport</keyword>
<keyword id="KW-0811">Translocation</keyword>
<keyword id="KW-0813">Transport</keyword>
<accession>B3CMS4</accession>
<reference key="1">
    <citation type="journal article" date="2008" name="Mol. Biol. Evol.">
        <title>Genome evolution of Wolbachia strain wPip from the Culex pipiens group.</title>
        <authorList>
            <person name="Klasson L."/>
            <person name="Walker T."/>
            <person name="Sebaihia M."/>
            <person name="Sanders M.J."/>
            <person name="Quail M.A."/>
            <person name="Lord A."/>
            <person name="Sanders S."/>
            <person name="Earl J."/>
            <person name="O'Neill S.L."/>
            <person name="Thomson N."/>
            <person name="Sinkins S.P."/>
            <person name="Parkhill J."/>
        </authorList>
    </citation>
    <scope>NUCLEOTIDE SEQUENCE [LARGE SCALE GENOMIC DNA]</scope>
    <source>
        <strain>wPip</strain>
    </source>
</reference>